<gene>
    <name evidence="1" type="primary">pyrB</name>
    <name type="ordered locus">P9211_02551</name>
</gene>
<accession>A9BDK0</accession>
<organism>
    <name type="scientific">Prochlorococcus marinus (strain MIT 9211)</name>
    <dbReference type="NCBI Taxonomy" id="93059"/>
    <lineage>
        <taxon>Bacteria</taxon>
        <taxon>Bacillati</taxon>
        <taxon>Cyanobacteriota</taxon>
        <taxon>Cyanophyceae</taxon>
        <taxon>Synechococcales</taxon>
        <taxon>Prochlorococcaceae</taxon>
        <taxon>Prochlorococcus</taxon>
    </lineage>
</organism>
<reference key="1">
    <citation type="journal article" date="2007" name="PLoS Genet.">
        <title>Patterns and implications of gene gain and loss in the evolution of Prochlorococcus.</title>
        <authorList>
            <person name="Kettler G.C."/>
            <person name="Martiny A.C."/>
            <person name="Huang K."/>
            <person name="Zucker J."/>
            <person name="Coleman M.L."/>
            <person name="Rodrigue S."/>
            <person name="Chen F."/>
            <person name="Lapidus A."/>
            <person name="Ferriera S."/>
            <person name="Johnson J."/>
            <person name="Steglich C."/>
            <person name="Church G.M."/>
            <person name="Richardson P."/>
            <person name="Chisholm S.W."/>
        </authorList>
    </citation>
    <scope>NUCLEOTIDE SEQUENCE [LARGE SCALE GENOMIC DNA]</scope>
    <source>
        <strain>MIT 9211</strain>
    </source>
</reference>
<evidence type="ECO:0000255" key="1">
    <source>
        <dbReference type="HAMAP-Rule" id="MF_00001"/>
    </source>
</evidence>
<feature type="chain" id="PRO_1000088786" description="Aspartate carbamoyltransferase catalytic subunit">
    <location>
        <begin position="1"/>
        <end position="337"/>
    </location>
</feature>
<feature type="binding site" evidence="1">
    <location>
        <position position="59"/>
    </location>
    <ligand>
        <name>carbamoyl phosphate</name>
        <dbReference type="ChEBI" id="CHEBI:58228"/>
    </ligand>
</feature>
<feature type="binding site" evidence="1">
    <location>
        <position position="60"/>
    </location>
    <ligand>
        <name>carbamoyl phosphate</name>
        <dbReference type="ChEBI" id="CHEBI:58228"/>
    </ligand>
</feature>
<feature type="binding site" evidence="1">
    <location>
        <position position="87"/>
    </location>
    <ligand>
        <name>L-aspartate</name>
        <dbReference type="ChEBI" id="CHEBI:29991"/>
    </ligand>
</feature>
<feature type="binding site" evidence="1">
    <location>
        <position position="109"/>
    </location>
    <ligand>
        <name>carbamoyl phosphate</name>
        <dbReference type="ChEBI" id="CHEBI:58228"/>
    </ligand>
</feature>
<feature type="binding site" evidence="1">
    <location>
        <position position="142"/>
    </location>
    <ligand>
        <name>carbamoyl phosphate</name>
        <dbReference type="ChEBI" id="CHEBI:58228"/>
    </ligand>
</feature>
<feature type="binding site" evidence="1">
    <location>
        <position position="145"/>
    </location>
    <ligand>
        <name>carbamoyl phosphate</name>
        <dbReference type="ChEBI" id="CHEBI:58228"/>
    </ligand>
</feature>
<feature type="binding site" evidence="1">
    <location>
        <position position="182"/>
    </location>
    <ligand>
        <name>L-aspartate</name>
        <dbReference type="ChEBI" id="CHEBI:29991"/>
    </ligand>
</feature>
<feature type="binding site" evidence="1">
    <location>
        <position position="253"/>
    </location>
    <ligand>
        <name>L-aspartate</name>
        <dbReference type="ChEBI" id="CHEBI:29991"/>
    </ligand>
</feature>
<feature type="binding site" evidence="1">
    <location>
        <position position="294"/>
    </location>
    <ligand>
        <name>carbamoyl phosphate</name>
        <dbReference type="ChEBI" id="CHEBI:58228"/>
    </ligand>
</feature>
<feature type="binding site" evidence="1">
    <location>
        <position position="295"/>
    </location>
    <ligand>
        <name>carbamoyl phosphate</name>
        <dbReference type="ChEBI" id="CHEBI:58228"/>
    </ligand>
</feature>
<comment type="function">
    <text evidence="1">Catalyzes the condensation of carbamoyl phosphate and aspartate to form carbamoyl aspartate and inorganic phosphate, the committed step in the de novo pyrimidine nucleotide biosynthesis pathway.</text>
</comment>
<comment type="catalytic activity">
    <reaction evidence="1">
        <text>carbamoyl phosphate + L-aspartate = N-carbamoyl-L-aspartate + phosphate + H(+)</text>
        <dbReference type="Rhea" id="RHEA:20013"/>
        <dbReference type="ChEBI" id="CHEBI:15378"/>
        <dbReference type="ChEBI" id="CHEBI:29991"/>
        <dbReference type="ChEBI" id="CHEBI:32814"/>
        <dbReference type="ChEBI" id="CHEBI:43474"/>
        <dbReference type="ChEBI" id="CHEBI:58228"/>
        <dbReference type="EC" id="2.1.3.2"/>
    </reaction>
</comment>
<comment type="pathway">
    <text evidence="1">Pyrimidine metabolism; UMP biosynthesis via de novo pathway; (S)-dihydroorotate from bicarbonate: step 2/3.</text>
</comment>
<comment type="subunit">
    <text evidence="1">Heterododecamer (2C3:3R2) of six catalytic PyrB chains organized as two trimers (C3), and six regulatory PyrI chains organized as three dimers (R2).</text>
</comment>
<comment type="similarity">
    <text evidence="1">Belongs to the aspartate/ornithine carbamoyltransferase superfamily. ATCase family.</text>
</comment>
<protein>
    <recommendedName>
        <fullName evidence="1">Aspartate carbamoyltransferase catalytic subunit</fullName>
        <ecNumber evidence="1">2.1.3.2</ecNumber>
    </recommendedName>
    <alternativeName>
        <fullName evidence="1">Aspartate transcarbamylase</fullName>
        <shortName evidence="1">ATCase</shortName>
    </alternativeName>
</protein>
<proteinExistence type="inferred from homology"/>
<keyword id="KW-0665">Pyrimidine biosynthesis</keyword>
<keyword id="KW-1185">Reference proteome</keyword>
<keyword id="KW-0808">Transferase</keyword>
<dbReference type="EC" id="2.1.3.2" evidence="1"/>
<dbReference type="EMBL" id="CP000878">
    <property type="protein sequence ID" value="ABX08186.1"/>
    <property type="molecule type" value="Genomic_DNA"/>
</dbReference>
<dbReference type="RefSeq" id="WP_012194811.1">
    <property type="nucleotide sequence ID" value="NC_009976.1"/>
</dbReference>
<dbReference type="SMR" id="A9BDK0"/>
<dbReference type="STRING" id="93059.P9211_02551"/>
<dbReference type="KEGG" id="pmj:P9211_02551"/>
<dbReference type="eggNOG" id="COG0540">
    <property type="taxonomic scope" value="Bacteria"/>
</dbReference>
<dbReference type="HOGENOM" id="CLU_043846_2_0_3"/>
<dbReference type="OrthoDB" id="9774690at2"/>
<dbReference type="UniPathway" id="UPA00070">
    <property type="reaction ID" value="UER00116"/>
</dbReference>
<dbReference type="Proteomes" id="UP000000788">
    <property type="component" value="Chromosome"/>
</dbReference>
<dbReference type="GO" id="GO:0005829">
    <property type="term" value="C:cytosol"/>
    <property type="evidence" value="ECO:0007669"/>
    <property type="project" value="TreeGrafter"/>
</dbReference>
<dbReference type="GO" id="GO:0016597">
    <property type="term" value="F:amino acid binding"/>
    <property type="evidence" value="ECO:0007669"/>
    <property type="project" value="InterPro"/>
</dbReference>
<dbReference type="GO" id="GO:0004070">
    <property type="term" value="F:aspartate carbamoyltransferase activity"/>
    <property type="evidence" value="ECO:0007669"/>
    <property type="project" value="UniProtKB-UniRule"/>
</dbReference>
<dbReference type="GO" id="GO:0006207">
    <property type="term" value="P:'de novo' pyrimidine nucleobase biosynthetic process"/>
    <property type="evidence" value="ECO:0007669"/>
    <property type="project" value="InterPro"/>
</dbReference>
<dbReference type="GO" id="GO:0044205">
    <property type="term" value="P:'de novo' UMP biosynthetic process"/>
    <property type="evidence" value="ECO:0007669"/>
    <property type="project" value="UniProtKB-UniRule"/>
</dbReference>
<dbReference type="GO" id="GO:0006520">
    <property type="term" value="P:amino acid metabolic process"/>
    <property type="evidence" value="ECO:0007669"/>
    <property type="project" value="InterPro"/>
</dbReference>
<dbReference type="Gene3D" id="3.40.50.1370">
    <property type="entry name" value="Aspartate/ornithine carbamoyltransferase"/>
    <property type="match status" value="2"/>
</dbReference>
<dbReference type="HAMAP" id="MF_00001">
    <property type="entry name" value="Asp_carb_tr"/>
    <property type="match status" value="1"/>
</dbReference>
<dbReference type="InterPro" id="IPR006132">
    <property type="entry name" value="Asp/Orn_carbamoyltranf_P-bd"/>
</dbReference>
<dbReference type="InterPro" id="IPR006130">
    <property type="entry name" value="Asp/Orn_carbamoylTrfase"/>
</dbReference>
<dbReference type="InterPro" id="IPR036901">
    <property type="entry name" value="Asp/Orn_carbamoylTrfase_sf"/>
</dbReference>
<dbReference type="InterPro" id="IPR002082">
    <property type="entry name" value="Asp_carbamoyltransf"/>
</dbReference>
<dbReference type="InterPro" id="IPR006131">
    <property type="entry name" value="Asp_carbamoyltransf_Asp/Orn-bd"/>
</dbReference>
<dbReference type="NCBIfam" id="TIGR00670">
    <property type="entry name" value="asp_carb_tr"/>
    <property type="match status" value="1"/>
</dbReference>
<dbReference type="NCBIfam" id="NF002032">
    <property type="entry name" value="PRK00856.1"/>
    <property type="match status" value="1"/>
</dbReference>
<dbReference type="PANTHER" id="PTHR45753:SF6">
    <property type="entry name" value="ASPARTATE CARBAMOYLTRANSFERASE"/>
    <property type="match status" value="1"/>
</dbReference>
<dbReference type="PANTHER" id="PTHR45753">
    <property type="entry name" value="ORNITHINE CARBAMOYLTRANSFERASE, MITOCHONDRIAL"/>
    <property type="match status" value="1"/>
</dbReference>
<dbReference type="Pfam" id="PF00185">
    <property type="entry name" value="OTCace"/>
    <property type="match status" value="1"/>
</dbReference>
<dbReference type="Pfam" id="PF02729">
    <property type="entry name" value="OTCace_N"/>
    <property type="match status" value="1"/>
</dbReference>
<dbReference type="PRINTS" id="PR00100">
    <property type="entry name" value="AOTCASE"/>
</dbReference>
<dbReference type="PRINTS" id="PR00101">
    <property type="entry name" value="ATCASE"/>
</dbReference>
<dbReference type="SUPFAM" id="SSF53671">
    <property type="entry name" value="Aspartate/ornithine carbamoyltransferase"/>
    <property type="match status" value="1"/>
</dbReference>
<dbReference type="PROSITE" id="PS00097">
    <property type="entry name" value="CARBAMOYLTRANSFERASE"/>
    <property type="match status" value="1"/>
</dbReference>
<sequence length="337" mass="37136">MASWNHKHIIDLAAFSLEDYQNVLELANRFKALPKSGARKLPALQGRFIAILFFEPSTRTRTSFEIAAKRLSADVQTFSASTSSLTKGETPLDTALTYVAMGADTLVIRHSSSGVPEQIAKSLEKAGKKTAILNGGDGLHSHPSQALLDLFTLVNFFEPSKPDIKSIKGKRIAIVGDILHSRVARSNLWSLTGCGADVILCGPKSLLPNDFVDFVSSPPPGQLIDPIKNRGKVMISRSLKETLQQSDAVITLRLQKERMNQNLLTNLGSYHREYGISRRILQNFRKEIPVLHPGPVNRGIEISSELLDDQSICLTQEQVKNGIPIRMALLYLLMASK</sequence>
<name>PYRB_PROM4</name>